<accession>Q07463</accession>
<gene>
    <name type="primary">PUR7</name>
    <name type="synonym">PURC</name>
</gene>
<sequence length="341" mass="38100">RDSTTHQSHFRGGVGVTKISFKPHGFRAIRASVMPSEGQQQSSLGDSLVNSPHRNDVVDVIRKSAISNCLSETNLHNTVPGLVSKTRGKVRDIYDAGDYLVLVTTDRQSAFDRILASIPFKGQVLNETSLWWFERTKQIVPNAVVSAPDKNVTIAKKCSVFPVEFVARGFVTGSTDTSLWTVYNKGARNYCGNVLPDGMVKNQKLSENILTPTTKAADHDVPVTPDEIIERGLMTRSDYEEVSEKALSLFEYGQQVASEHGLILVDTKYEFGKANDGSIMLIDEVHTPDSSRYWIASSYPERFQNGLEPENIDKEFLRLWFKSHCNPYEDEVLPDAPEDLL</sequence>
<organism>
    <name type="scientific">Vigna aconitifolia</name>
    <name type="common">Moth bean</name>
    <name type="synonym">Phaseolus aconitifolius</name>
    <dbReference type="NCBI Taxonomy" id="3918"/>
    <lineage>
        <taxon>Eukaryota</taxon>
        <taxon>Viridiplantae</taxon>
        <taxon>Streptophyta</taxon>
        <taxon>Embryophyta</taxon>
        <taxon>Tracheophyta</taxon>
        <taxon>Spermatophyta</taxon>
        <taxon>Magnoliopsida</taxon>
        <taxon>eudicotyledons</taxon>
        <taxon>Gunneridae</taxon>
        <taxon>Pentapetalae</taxon>
        <taxon>rosids</taxon>
        <taxon>fabids</taxon>
        <taxon>Fabales</taxon>
        <taxon>Fabaceae</taxon>
        <taxon>Papilionoideae</taxon>
        <taxon>50 kb inversion clade</taxon>
        <taxon>NPAAA clade</taxon>
        <taxon>indigoferoid/millettioid clade</taxon>
        <taxon>Phaseoleae</taxon>
        <taxon>Vigna</taxon>
    </lineage>
</organism>
<name>PUR7_VIGAC</name>
<proteinExistence type="evidence at transcript level"/>
<evidence type="ECO:0000255" key="1"/>
<evidence type="ECO:0000305" key="2"/>
<dbReference type="EC" id="6.3.2.6"/>
<dbReference type="EMBL" id="M92931">
    <property type="protein sequence ID" value="AAC37399.1"/>
    <property type="status" value="ALT_INIT"/>
    <property type="molecule type" value="mRNA"/>
</dbReference>
<dbReference type="PIR" id="S43323">
    <property type="entry name" value="S43323"/>
</dbReference>
<dbReference type="PIR" id="S45524">
    <property type="entry name" value="S45524"/>
</dbReference>
<dbReference type="SMR" id="Q07463"/>
<dbReference type="UniPathway" id="UPA00074">
    <property type="reaction ID" value="UER00131"/>
</dbReference>
<dbReference type="GO" id="GO:0009570">
    <property type="term" value="C:chloroplast stroma"/>
    <property type="evidence" value="ECO:0007669"/>
    <property type="project" value="TreeGrafter"/>
</dbReference>
<dbReference type="GO" id="GO:0005524">
    <property type="term" value="F:ATP binding"/>
    <property type="evidence" value="ECO:0007669"/>
    <property type="project" value="UniProtKB-KW"/>
</dbReference>
<dbReference type="GO" id="GO:0004639">
    <property type="term" value="F:phosphoribosylaminoimidazolesuccinocarboxamide synthase activity"/>
    <property type="evidence" value="ECO:0007669"/>
    <property type="project" value="UniProtKB-EC"/>
</dbReference>
<dbReference type="GO" id="GO:0006189">
    <property type="term" value="P:'de novo' IMP biosynthetic process"/>
    <property type="evidence" value="ECO:0007669"/>
    <property type="project" value="UniProtKB-UniPathway"/>
</dbReference>
<dbReference type="CDD" id="cd01414">
    <property type="entry name" value="SAICAR_synt_Sc"/>
    <property type="match status" value="1"/>
</dbReference>
<dbReference type="FunFam" id="3.30.200.20:FF:000199">
    <property type="entry name" value="Phosphoribosylaminoimidazole-succinocarboxamide synthase"/>
    <property type="match status" value="1"/>
</dbReference>
<dbReference type="FunFam" id="3.30.470.20:FF:000015">
    <property type="entry name" value="Phosphoribosylaminoimidazole-succinocarboxamide synthase"/>
    <property type="match status" value="1"/>
</dbReference>
<dbReference type="Gene3D" id="3.30.470.20">
    <property type="entry name" value="ATP-grasp fold, B domain"/>
    <property type="match status" value="1"/>
</dbReference>
<dbReference type="Gene3D" id="3.30.200.20">
    <property type="entry name" value="Phosphorylase Kinase, domain 1"/>
    <property type="match status" value="1"/>
</dbReference>
<dbReference type="HAMAP" id="MF_00137">
    <property type="entry name" value="SAICAR_synth"/>
    <property type="match status" value="1"/>
</dbReference>
<dbReference type="InterPro" id="IPR028923">
    <property type="entry name" value="SAICAR_synt/ADE2_N"/>
</dbReference>
<dbReference type="InterPro" id="IPR018236">
    <property type="entry name" value="SAICAR_synthetase_CS"/>
</dbReference>
<dbReference type="NCBIfam" id="NF009251">
    <property type="entry name" value="PRK12607.1"/>
    <property type="match status" value="1"/>
</dbReference>
<dbReference type="PANTHER" id="PTHR43700">
    <property type="entry name" value="PHOSPHORIBOSYLAMINOIMIDAZOLE-SUCCINOCARBOXAMIDE SYNTHASE"/>
    <property type="match status" value="1"/>
</dbReference>
<dbReference type="PANTHER" id="PTHR43700:SF1">
    <property type="entry name" value="PHOSPHORIBOSYLAMINOIMIDAZOLE-SUCCINOCARBOXAMIDE SYNTHASE"/>
    <property type="match status" value="1"/>
</dbReference>
<dbReference type="Pfam" id="PF01259">
    <property type="entry name" value="SAICAR_synt"/>
    <property type="match status" value="1"/>
</dbReference>
<dbReference type="SUPFAM" id="SSF56104">
    <property type="entry name" value="SAICAR synthase-like"/>
    <property type="match status" value="1"/>
</dbReference>
<dbReference type="PROSITE" id="PS01057">
    <property type="entry name" value="SAICAR_SYNTHETASE_1"/>
    <property type="match status" value="1"/>
</dbReference>
<dbReference type="PROSITE" id="PS01058">
    <property type="entry name" value="SAICAR_SYNTHETASE_2"/>
    <property type="match status" value="1"/>
</dbReference>
<protein>
    <recommendedName>
        <fullName>Phosphoribosylaminoimidazole-succinocarboxamide synthase, chloroplastic</fullName>
        <ecNumber>6.3.2.6</ecNumber>
    </recommendedName>
    <alternativeName>
        <fullName>SAICAR synthetase</fullName>
    </alternativeName>
</protein>
<comment type="catalytic activity">
    <reaction>
        <text>5-amino-1-(5-phospho-D-ribosyl)imidazole-4-carboxylate + L-aspartate + ATP = (2S)-2-[5-amino-1-(5-phospho-beta-D-ribosyl)imidazole-4-carboxamido]succinate + ADP + phosphate + 2 H(+)</text>
        <dbReference type="Rhea" id="RHEA:22628"/>
        <dbReference type="ChEBI" id="CHEBI:15378"/>
        <dbReference type="ChEBI" id="CHEBI:29991"/>
        <dbReference type="ChEBI" id="CHEBI:30616"/>
        <dbReference type="ChEBI" id="CHEBI:43474"/>
        <dbReference type="ChEBI" id="CHEBI:58443"/>
        <dbReference type="ChEBI" id="CHEBI:77657"/>
        <dbReference type="ChEBI" id="CHEBI:456216"/>
        <dbReference type="EC" id="6.3.2.6"/>
    </reaction>
</comment>
<comment type="pathway">
    <text>Purine metabolism; IMP biosynthesis via de novo pathway; 5-amino-1-(5-phospho-D-ribosyl)imidazole-4-carboxamide from 5-amino-1-(5-phospho-D-ribosyl)imidazole-4-carboxylate: step 1/2.</text>
</comment>
<comment type="subcellular location">
    <subcellularLocation>
        <location evidence="2">Plastid</location>
        <location evidence="2">Chloroplast</location>
    </subcellularLocation>
</comment>
<comment type="developmental stage">
    <text>First expressed in 19-day old nodules.</text>
</comment>
<comment type="similarity">
    <text evidence="2">Belongs to the SAICAR synthetase family.</text>
</comment>
<comment type="sequence caution" evidence="2">
    <conflict type="erroneous initiation">
        <sequence resource="EMBL-CDS" id="AAC37399"/>
    </conflict>
</comment>
<keyword id="KW-0067">ATP-binding</keyword>
<keyword id="KW-0150">Chloroplast</keyword>
<keyword id="KW-0436">Ligase</keyword>
<keyword id="KW-0547">Nucleotide-binding</keyword>
<keyword id="KW-0934">Plastid</keyword>
<keyword id="KW-0658">Purine biosynthesis</keyword>
<keyword id="KW-0809">Transit peptide</keyword>
<feature type="transit peptide" description="Chloroplast" evidence="1">
    <location>
        <begin position="1" status="less than"/>
        <end status="unknown"/>
    </location>
</feature>
<feature type="chain" id="PRO_0000029874" description="Phosphoribosylaminoimidazole-succinocarboxamide synthase, chloroplastic">
    <location>
        <begin status="unknown"/>
        <end position="341"/>
    </location>
</feature>
<feature type="non-terminal residue">
    <location>
        <position position="1"/>
    </location>
</feature>
<reference key="1">
    <citation type="journal article" date="1994" name="Plant Mol. Biol.">
        <title>Structural organization of de novo purine biosynthesis enzymes in plants: 5-aminoimidazole ribonucleotide carboxylase and 5-aminoimidazole-4-N-succinocarboxamide ribonucleotide synthetase cDNAs from Vigna aconitifolia.</title>
        <authorList>
            <person name="Chapman K.A."/>
            <person name="Delauney A.J."/>
            <person name="Kim J.H."/>
            <person name="Verma D.P.S."/>
        </authorList>
    </citation>
    <scope>NUCLEOTIDE SEQUENCE [MRNA]</scope>
    <source>
        <tissue>Root nodule</tissue>
    </source>
</reference>